<sequence>MGDILRDTADPQTPEELCRLYRSLTEQLRDQLQRIETDKQDLESQMLERISSLESRNLELREQIRQAEADKRYIETQKIRYEREVRKLKSESEQLRSPPLIIGTVVDVVDANRVIVRSSAGPRFLVRSSPSVNPDDIKPGARCTLNQQSLAIVELLPSSFDAQVYGMELVDSPQECYTDIGGLKEQINEVREAVELPLKRPELFTQIGIEPPKGVLLYGPPGTGKTLLAKAVAHETNAHFMRVVGSELVQKYIGEGARLVRELFDLAKKKAPTIIFIDEIDAVGASRTEANTSGDREVQRTLMQLLAGMDGFETRGDVKIIGATNRIDILDKALLRPGRFDRIIEIPLPDEEGRLSILKVHTRTLTMEETVNLPEIAGLTEGKNGADLRAICMEAGMYAIRNERPAITREDFLSAIEKVRLDFSHSPTDSEGRMFA</sequence>
<accession>A7I8B8</accession>
<organism>
    <name type="scientific">Methanoregula boonei (strain DSM 21154 / JCM 14090 / 6A8)</name>
    <dbReference type="NCBI Taxonomy" id="456442"/>
    <lineage>
        <taxon>Archaea</taxon>
        <taxon>Methanobacteriati</taxon>
        <taxon>Methanobacteriota</taxon>
        <taxon>Stenosarchaea group</taxon>
        <taxon>Methanomicrobia</taxon>
        <taxon>Methanomicrobiales</taxon>
        <taxon>Methanoregulaceae</taxon>
        <taxon>Methanoregula</taxon>
    </lineage>
</organism>
<dbReference type="EMBL" id="CP000780">
    <property type="protein sequence ID" value="ABS55979.1"/>
    <property type="molecule type" value="Genomic_DNA"/>
</dbReference>
<dbReference type="SMR" id="A7I8B8"/>
<dbReference type="STRING" id="456442.Mboo_1461"/>
<dbReference type="KEGG" id="mbn:Mboo_1461"/>
<dbReference type="eggNOG" id="arCOG01306">
    <property type="taxonomic scope" value="Archaea"/>
</dbReference>
<dbReference type="HOGENOM" id="CLU_000688_2_1_2"/>
<dbReference type="Proteomes" id="UP000002408">
    <property type="component" value="Chromosome"/>
</dbReference>
<dbReference type="GO" id="GO:0005737">
    <property type="term" value="C:cytoplasm"/>
    <property type="evidence" value="ECO:0007669"/>
    <property type="project" value="UniProtKB-SubCell"/>
</dbReference>
<dbReference type="GO" id="GO:0022623">
    <property type="term" value="C:proteasome-activating nucleotidase complex"/>
    <property type="evidence" value="ECO:0007669"/>
    <property type="project" value="UniProtKB-UniRule"/>
</dbReference>
<dbReference type="GO" id="GO:0005524">
    <property type="term" value="F:ATP binding"/>
    <property type="evidence" value="ECO:0007669"/>
    <property type="project" value="UniProtKB-UniRule"/>
</dbReference>
<dbReference type="GO" id="GO:0016887">
    <property type="term" value="F:ATP hydrolysis activity"/>
    <property type="evidence" value="ECO:0007669"/>
    <property type="project" value="UniProtKB-UniRule"/>
</dbReference>
<dbReference type="GO" id="GO:0010498">
    <property type="term" value="P:proteasomal protein catabolic process"/>
    <property type="evidence" value="ECO:0007669"/>
    <property type="project" value="UniProtKB-UniRule"/>
</dbReference>
<dbReference type="GO" id="GO:0043335">
    <property type="term" value="P:protein unfolding"/>
    <property type="evidence" value="ECO:0007669"/>
    <property type="project" value="UniProtKB-UniRule"/>
</dbReference>
<dbReference type="CDD" id="cd19502">
    <property type="entry name" value="RecA-like_PAN_like"/>
    <property type="match status" value="1"/>
</dbReference>
<dbReference type="FunFam" id="3.40.50.300:FF:000033">
    <property type="entry name" value="26S protease regulatory subunit 6B"/>
    <property type="match status" value="1"/>
</dbReference>
<dbReference type="Gene3D" id="1.10.8.60">
    <property type="match status" value="1"/>
</dbReference>
<dbReference type="Gene3D" id="2.40.50.140">
    <property type="entry name" value="Nucleic acid-binding proteins"/>
    <property type="match status" value="1"/>
</dbReference>
<dbReference type="Gene3D" id="3.40.50.300">
    <property type="entry name" value="P-loop containing nucleotide triphosphate hydrolases"/>
    <property type="match status" value="1"/>
</dbReference>
<dbReference type="HAMAP" id="MF_00553">
    <property type="entry name" value="PAN"/>
    <property type="match status" value="1"/>
</dbReference>
<dbReference type="InterPro" id="IPR050221">
    <property type="entry name" value="26S_Proteasome_ATPase"/>
</dbReference>
<dbReference type="InterPro" id="IPR003593">
    <property type="entry name" value="AAA+_ATPase"/>
</dbReference>
<dbReference type="InterPro" id="IPR041569">
    <property type="entry name" value="AAA_lid_3"/>
</dbReference>
<dbReference type="InterPro" id="IPR003959">
    <property type="entry name" value="ATPase_AAA_core"/>
</dbReference>
<dbReference type="InterPro" id="IPR003960">
    <property type="entry name" value="ATPase_AAA_CS"/>
</dbReference>
<dbReference type="InterPro" id="IPR012340">
    <property type="entry name" value="NA-bd_OB-fold"/>
</dbReference>
<dbReference type="InterPro" id="IPR023501">
    <property type="entry name" value="Nucleotidase_PAN"/>
</dbReference>
<dbReference type="InterPro" id="IPR027417">
    <property type="entry name" value="P-loop_NTPase"/>
</dbReference>
<dbReference type="InterPro" id="IPR032501">
    <property type="entry name" value="Prot_ATP_ID_OB_2nd"/>
</dbReference>
<dbReference type="NCBIfam" id="NF003069">
    <property type="entry name" value="PRK03992.1"/>
    <property type="match status" value="1"/>
</dbReference>
<dbReference type="NCBIfam" id="TIGR01242">
    <property type="entry name" value="proteasome-activating nucleotidase"/>
    <property type="match status" value="1"/>
</dbReference>
<dbReference type="PANTHER" id="PTHR23073">
    <property type="entry name" value="26S PROTEASOME REGULATORY SUBUNIT"/>
    <property type="match status" value="1"/>
</dbReference>
<dbReference type="Pfam" id="PF00004">
    <property type="entry name" value="AAA"/>
    <property type="match status" value="1"/>
</dbReference>
<dbReference type="Pfam" id="PF17862">
    <property type="entry name" value="AAA_lid_3"/>
    <property type="match status" value="1"/>
</dbReference>
<dbReference type="Pfam" id="PF16450">
    <property type="entry name" value="Prot_ATP_ID_OB_C"/>
    <property type="match status" value="1"/>
</dbReference>
<dbReference type="SMART" id="SM00382">
    <property type="entry name" value="AAA"/>
    <property type="match status" value="1"/>
</dbReference>
<dbReference type="SUPFAM" id="SSF52540">
    <property type="entry name" value="P-loop containing nucleoside triphosphate hydrolases"/>
    <property type="match status" value="1"/>
</dbReference>
<dbReference type="PROSITE" id="PS00674">
    <property type="entry name" value="AAA"/>
    <property type="match status" value="1"/>
</dbReference>
<protein>
    <recommendedName>
        <fullName evidence="1">Proteasome-activating nucleotidase</fullName>
        <shortName evidence="1">PAN</shortName>
    </recommendedName>
    <alternativeName>
        <fullName evidence="1">Proteasomal ATPase</fullName>
    </alternativeName>
    <alternativeName>
        <fullName evidence="1">Proteasome regulatory ATPase</fullName>
    </alternativeName>
    <alternativeName>
        <fullName evidence="1">Proteasome regulatory particle</fullName>
    </alternativeName>
</protein>
<feature type="chain" id="PRO_1000017920" description="Proteasome-activating nucleotidase">
    <location>
        <begin position="1"/>
        <end position="436"/>
    </location>
</feature>
<feature type="region of interest" description="Docks into pockets in the proteasome alpha-ring to cause gate opening" evidence="1">
    <location>
        <begin position="434"/>
        <end position="436"/>
    </location>
</feature>
<feature type="coiled-coil region" evidence="1">
    <location>
        <begin position="15"/>
        <end position="97"/>
    </location>
</feature>
<feature type="binding site" evidence="1">
    <location>
        <begin position="222"/>
        <end position="227"/>
    </location>
    <ligand>
        <name>ATP</name>
        <dbReference type="ChEBI" id="CHEBI:30616"/>
    </ligand>
</feature>
<feature type="binding site" evidence="1">
    <location>
        <position position="361"/>
    </location>
    <ligand>
        <name>ATP</name>
        <dbReference type="ChEBI" id="CHEBI:30616"/>
    </ligand>
</feature>
<gene>
    <name evidence="1" type="primary">pan</name>
    <name type="ordered locus">Mboo_1461</name>
</gene>
<proteinExistence type="inferred from homology"/>
<reference key="1">
    <citation type="journal article" date="2015" name="Microbiology">
        <title>Genome of Methanoregula boonei 6A8 reveals adaptations to oligotrophic peatland environments.</title>
        <authorList>
            <person name="Braeuer S."/>
            <person name="Cadillo-Quiroz H."/>
            <person name="Kyrpides N."/>
            <person name="Woyke T."/>
            <person name="Goodwin L."/>
            <person name="Detter C."/>
            <person name="Podell S."/>
            <person name="Yavitt J.B."/>
            <person name="Zinder S.H."/>
        </authorList>
    </citation>
    <scope>NUCLEOTIDE SEQUENCE [LARGE SCALE GENOMIC DNA]</scope>
    <source>
        <strain>DSM 21154 / JCM 14090 / 6A8</strain>
    </source>
</reference>
<name>PAN_METB6</name>
<keyword id="KW-0067">ATP-binding</keyword>
<keyword id="KW-0143">Chaperone</keyword>
<keyword id="KW-0175">Coiled coil</keyword>
<keyword id="KW-0963">Cytoplasm</keyword>
<keyword id="KW-0547">Nucleotide-binding</keyword>
<keyword id="KW-0647">Proteasome</keyword>
<keyword id="KW-1185">Reference proteome</keyword>
<comment type="function">
    <text evidence="1">ATPase which is responsible for recognizing, binding, unfolding and translocation of substrate proteins into the archaeal 20S proteasome core particle. Is essential for opening the gate of the 20S proteasome via an interaction with its C-terminus, thereby allowing substrate entry and access to the site of proteolysis. Thus, the C-termini of the proteasomal ATPase function like a 'key in a lock' to induce gate opening and therefore regulate proteolysis. Unfolding activity requires energy from ATP hydrolysis, whereas ATP binding alone promotes ATPase-20S proteasome association which triggers gate opening, and supports translocation of unfolded substrates.</text>
</comment>
<comment type="subunit">
    <text evidence="1">Homohexamer. The hexameric complex has a two-ring architecture resembling a top hat that caps the 20S proteasome core at one or both ends. Upon ATP-binding, the C-terminus of PAN interacts with the alpha-rings of the proteasome core by binding to the intersubunit pockets.</text>
</comment>
<comment type="subcellular location">
    <subcellularLocation>
        <location evidence="1">Cytoplasm</location>
    </subcellularLocation>
</comment>
<comment type="domain">
    <text evidence="1">Consists of three main regions, an N-terminal coiled-coil domain that may assist in substrate recognition, an interdomain involved in PAN hexamerization, and a C-terminal ATPase domain of the AAA type.</text>
</comment>
<comment type="similarity">
    <text evidence="1">Belongs to the AAA ATPase family.</text>
</comment>
<evidence type="ECO:0000255" key="1">
    <source>
        <dbReference type="HAMAP-Rule" id="MF_00553"/>
    </source>
</evidence>